<feature type="chain" id="PRO_1000090123" description="Glutamate--tRNA ligase 1">
    <location>
        <begin position="1"/>
        <end position="471"/>
    </location>
</feature>
<feature type="region of interest" description="Disordered" evidence="2">
    <location>
        <begin position="113"/>
        <end position="140"/>
    </location>
</feature>
<feature type="short sequence motif" description="'HIGH' region" evidence="1">
    <location>
        <begin position="10"/>
        <end position="20"/>
    </location>
</feature>
<feature type="short sequence motif" description="'KMSKS' region" evidence="1">
    <location>
        <begin position="239"/>
        <end position="243"/>
    </location>
</feature>
<feature type="binding site" evidence="1">
    <location>
        <position position="242"/>
    </location>
    <ligand>
        <name>ATP</name>
        <dbReference type="ChEBI" id="CHEBI:30616"/>
    </ligand>
</feature>
<gene>
    <name evidence="1" type="primary">gltX1</name>
    <name type="ordered locus">Xaut_4369</name>
</gene>
<protein>
    <recommendedName>
        <fullName evidence="1">Glutamate--tRNA ligase 1</fullName>
        <ecNumber evidence="1">6.1.1.17</ecNumber>
    </recommendedName>
    <alternativeName>
        <fullName evidence="1">Glutamyl-tRNA synthetase 1</fullName>
        <shortName evidence="1">GluRS 1</shortName>
    </alternativeName>
</protein>
<evidence type="ECO:0000255" key="1">
    <source>
        <dbReference type="HAMAP-Rule" id="MF_00022"/>
    </source>
</evidence>
<evidence type="ECO:0000256" key="2">
    <source>
        <dbReference type="SAM" id="MobiDB-lite"/>
    </source>
</evidence>
<organism>
    <name type="scientific">Xanthobacter autotrophicus (strain ATCC BAA-1158 / Py2)</name>
    <dbReference type="NCBI Taxonomy" id="78245"/>
    <lineage>
        <taxon>Bacteria</taxon>
        <taxon>Pseudomonadati</taxon>
        <taxon>Pseudomonadota</taxon>
        <taxon>Alphaproteobacteria</taxon>
        <taxon>Hyphomicrobiales</taxon>
        <taxon>Xanthobacteraceae</taxon>
        <taxon>Xanthobacter</taxon>
    </lineage>
</organism>
<accession>A7INJ6</accession>
<comment type="function">
    <text evidence="1">Catalyzes the attachment of glutamate to tRNA(Glu) in a two-step reaction: glutamate is first activated by ATP to form Glu-AMP and then transferred to the acceptor end of tRNA(Glu).</text>
</comment>
<comment type="catalytic activity">
    <reaction evidence="1">
        <text>tRNA(Glu) + L-glutamate + ATP = L-glutamyl-tRNA(Glu) + AMP + diphosphate</text>
        <dbReference type="Rhea" id="RHEA:23540"/>
        <dbReference type="Rhea" id="RHEA-COMP:9663"/>
        <dbReference type="Rhea" id="RHEA-COMP:9680"/>
        <dbReference type="ChEBI" id="CHEBI:29985"/>
        <dbReference type="ChEBI" id="CHEBI:30616"/>
        <dbReference type="ChEBI" id="CHEBI:33019"/>
        <dbReference type="ChEBI" id="CHEBI:78442"/>
        <dbReference type="ChEBI" id="CHEBI:78520"/>
        <dbReference type="ChEBI" id="CHEBI:456215"/>
        <dbReference type="EC" id="6.1.1.17"/>
    </reaction>
</comment>
<comment type="subunit">
    <text evidence="1">Monomer.</text>
</comment>
<comment type="subcellular location">
    <subcellularLocation>
        <location evidence="1">Cytoplasm</location>
    </subcellularLocation>
</comment>
<comment type="similarity">
    <text evidence="1">Belongs to the class-I aminoacyl-tRNA synthetase family. Glutamate--tRNA ligase type 1 subfamily.</text>
</comment>
<proteinExistence type="inferred from homology"/>
<reference key="1">
    <citation type="submission" date="2007-07" db="EMBL/GenBank/DDBJ databases">
        <title>Complete sequence of chromosome of Xanthobacter autotrophicus Py2.</title>
        <authorList>
            <consortium name="US DOE Joint Genome Institute"/>
            <person name="Copeland A."/>
            <person name="Lucas S."/>
            <person name="Lapidus A."/>
            <person name="Barry K."/>
            <person name="Glavina del Rio T."/>
            <person name="Hammon N."/>
            <person name="Israni S."/>
            <person name="Dalin E."/>
            <person name="Tice H."/>
            <person name="Pitluck S."/>
            <person name="Sims D."/>
            <person name="Brettin T."/>
            <person name="Bruce D."/>
            <person name="Detter J.C."/>
            <person name="Han C."/>
            <person name="Tapia R."/>
            <person name="Brainard J."/>
            <person name="Schmutz J."/>
            <person name="Larimer F."/>
            <person name="Land M."/>
            <person name="Hauser L."/>
            <person name="Kyrpides N."/>
            <person name="Kim E."/>
            <person name="Ensigns S.A."/>
            <person name="Richardson P."/>
        </authorList>
    </citation>
    <scope>NUCLEOTIDE SEQUENCE [LARGE SCALE GENOMIC DNA]</scope>
    <source>
        <strain>ATCC BAA-1158 / Py2</strain>
    </source>
</reference>
<dbReference type="EC" id="6.1.1.17" evidence="1"/>
<dbReference type="EMBL" id="CP000781">
    <property type="protein sequence ID" value="ABS69590.1"/>
    <property type="molecule type" value="Genomic_DNA"/>
</dbReference>
<dbReference type="SMR" id="A7INJ6"/>
<dbReference type="STRING" id="78245.Xaut_4369"/>
<dbReference type="KEGG" id="xau:Xaut_4369"/>
<dbReference type="eggNOG" id="COG0008">
    <property type="taxonomic scope" value="Bacteria"/>
</dbReference>
<dbReference type="HOGENOM" id="CLU_015768_6_0_5"/>
<dbReference type="OrthoDB" id="9807503at2"/>
<dbReference type="PhylomeDB" id="A7INJ6"/>
<dbReference type="Proteomes" id="UP000002417">
    <property type="component" value="Chromosome"/>
</dbReference>
<dbReference type="GO" id="GO:0005829">
    <property type="term" value="C:cytosol"/>
    <property type="evidence" value="ECO:0007669"/>
    <property type="project" value="TreeGrafter"/>
</dbReference>
<dbReference type="GO" id="GO:0005524">
    <property type="term" value="F:ATP binding"/>
    <property type="evidence" value="ECO:0007669"/>
    <property type="project" value="UniProtKB-UniRule"/>
</dbReference>
<dbReference type="GO" id="GO:0004818">
    <property type="term" value="F:glutamate-tRNA ligase activity"/>
    <property type="evidence" value="ECO:0007669"/>
    <property type="project" value="UniProtKB-UniRule"/>
</dbReference>
<dbReference type="GO" id="GO:0000049">
    <property type="term" value="F:tRNA binding"/>
    <property type="evidence" value="ECO:0007669"/>
    <property type="project" value="InterPro"/>
</dbReference>
<dbReference type="GO" id="GO:0008270">
    <property type="term" value="F:zinc ion binding"/>
    <property type="evidence" value="ECO:0007669"/>
    <property type="project" value="InterPro"/>
</dbReference>
<dbReference type="GO" id="GO:0006424">
    <property type="term" value="P:glutamyl-tRNA aminoacylation"/>
    <property type="evidence" value="ECO:0007669"/>
    <property type="project" value="UniProtKB-UniRule"/>
</dbReference>
<dbReference type="CDD" id="cd00808">
    <property type="entry name" value="GluRS_core"/>
    <property type="match status" value="1"/>
</dbReference>
<dbReference type="FunFam" id="3.40.50.620:FF:000007">
    <property type="entry name" value="Glutamate--tRNA ligase"/>
    <property type="match status" value="1"/>
</dbReference>
<dbReference type="Gene3D" id="1.10.10.350">
    <property type="match status" value="1"/>
</dbReference>
<dbReference type="Gene3D" id="3.40.50.620">
    <property type="entry name" value="HUPs"/>
    <property type="match status" value="1"/>
</dbReference>
<dbReference type="HAMAP" id="MF_00022">
    <property type="entry name" value="Glu_tRNA_synth_type1"/>
    <property type="match status" value="1"/>
</dbReference>
<dbReference type="InterPro" id="IPR045462">
    <property type="entry name" value="aa-tRNA-synth_I_cd-bd"/>
</dbReference>
<dbReference type="InterPro" id="IPR020751">
    <property type="entry name" value="aa-tRNA-synth_I_codon-bd_sub2"/>
</dbReference>
<dbReference type="InterPro" id="IPR001412">
    <property type="entry name" value="aa-tRNA-synth_I_CS"/>
</dbReference>
<dbReference type="InterPro" id="IPR008925">
    <property type="entry name" value="aa_tRNA-synth_I_cd-bd_sf"/>
</dbReference>
<dbReference type="InterPro" id="IPR004527">
    <property type="entry name" value="Glu-tRNA-ligase_bac/mito"/>
</dbReference>
<dbReference type="InterPro" id="IPR000924">
    <property type="entry name" value="Glu/Gln-tRNA-synth"/>
</dbReference>
<dbReference type="InterPro" id="IPR020058">
    <property type="entry name" value="Glu/Gln-tRNA-synth_Ib_cat-dom"/>
</dbReference>
<dbReference type="InterPro" id="IPR049940">
    <property type="entry name" value="GluQ/Sye"/>
</dbReference>
<dbReference type="InterPro" id="IPR033910">
    <property type="entry name" value="GluRS_core"/>
</dbReference>
<dbReference type="InterPro" id="IPR014729">
    <property type="entry name" value="Rossmann-like_a/b/a_fold"/>
</dbReference>
<dbReference type="NCBIfam" id="TIGR00464">
    <property type="entry name" value="gltX_bact"/>
    <property type="match status" value="1"/>
</dbReference>
<dbReference type="PANTHER" id="PTHR43311">
    <property type="entry name" value="GLUTAMATE--TRNA LIGASE"/>
    <property type="match status" value="1"/>
</dbReference>
<dbReference type="PANTHER" id="PTHR43311:SF2">
    <property type="entry name" value="GLUTAMATE--TRNA LIGASE, MITOCHONDRIAL-RELATED"/>
    <property type="match status" value="1"/>
</dbReference>
<dbReference type="Pfam" id="PF19269">
    <property type="entry name" value="Anticodon_2"/>
    <property type="match status" value="1"/>
</dbReference>
<dbReference type="Pfam" id="PF00749">
    <property type="entry name" value="tRNA-synt_1c"/>
    <property type="match status" value="1"/>
</dbReference>
<dbReference type="PRINTS" id="PR00987">
    <property type="entry name" value="TRNASYNTHGLU"/>
</dbReference>
<dbReference type="SUPFAM" id="SSF48163">
    <property type="entry name" value="An anticodon-binding domain of class I aminoacyl-tRNA synthetases"/>
    <property type="match status" value="1"/>
</dbReference>
<dbReference type="SUPFAM" id="SSF52374">
    <property type="entry name" value="Nucleotidylyl transferase"/>
    <property type="match status" value="1"/>
</dbReference>
<dbReference type="PROSITE" id="PS00178">
    <property type="entry name" value="AA_TRNA_LIGASE_I"/>
    <property type="match status" value="1"/>
</dbReference>
<sequence>MSQIVTRFAPSPTGFLHIGGARTALFNWLYARHTGGKMLLRIEDTDRQRSTKEAIAAIIEGLEWLGITCDGDPIYQFARAERHRAAVEEMLAKGNAYRCYATPQELDEMRELARKEGRPPRYDGRWRDRDPSEAPKDRDPVIRLRAPQEGETVIDDMVQGTVTFPNKDLDDLVLLRSDGNPTYMLAVVVDDHDMGVTHVIRGDDHLTNAARQTQIYRALGWEVPRMAHIPLIHGPDGAKLSKRHGALGVDAYRDMGYLPAALRNYLVRLGWSHGDQEVFSTEEMVSFFDLDKVGRSAARFDFQKLESLNGHYMRASSDAELLSAIDALVPHLPDAEHRLARMTPERRAQLAAAMPGLKERAKTLVELVDNAEFIFVERPLPLDDKAAALLSPEARAHLARLVPALEQVEWTAAATEAAVRAYAEAQGVKLGAVAQPLRAALTGKPTSPPIFDVLMVLGRDESLARLKDQAA</sequence>
<keyword id="KW-0030">Aminoacyl-tRNA synthetase</keyword>
<keyword id="KW-0067">ATP-binding</keyword>
<keyword id="KW-0963">Cytoplasm</keyword>
<keyword id="KW-0436">Ligase</keyword>
<keyword id="KW-0547">Nucleotide-binding</keyword>
<keyword id="KW-0648">Protein biosynthesis</keyword>
<keyword id="KW-1185">Reference proteome</keyword>
<name>SYE1_XANP2</name>